<reference key="1">
    <citation type="journal article" date="2010" name="BMC Microbiol.">
        <title>Rhomboid homologs in Mycobacteria: insights from phylogeny and genomic analysis.</title>
        <authorList>
            <person name="Kateete D.P."/>
            <person name="Okee M."/>
            <person name="Katabazi F.A."/>
            <person name="Okeng A."/>
            <person name="Asiimwe J."/>
            <person name="Boom H.W."/>
            <person name="Eisenach K.D."/>
            <person name="Joloba M.L."/>
        </authorList>
    </citation>
    <scope>NUCLEOTIDE SEQUENCE [GENOMIC DNA]</scope>
    <source>
        <strain>BN44</strain>
    </source>
</reference>
<reference key="2">
    <citation type="journal article" date="1998" name="Nature">
        <title>Deciphering the biology of Mycobacterium tuberculosis from the complete genome sequence.</title>
        <authorList>
            <person name="Cole S.T."/>
            <person name="Brosch R."/>
            <person name="Parkhill J."/>
            <person name="Garnier T."/>
            <person name="Churcher C.M."/>
            <person name="Harris D.E."/>
            <person name="Gordon S.V."/>
            <person name="Eiglmeier K."/>
            <person name="Gas S."/>
            <person name="Barry C.E. III"/>
            <person name="Tekaia F."/>
            <person name="Badcock K."/>
            <person name="Basham D."/>
            <person name="Brown D."/>
            <person name="Chillingworth T."/>
            <person name="Connor R."/>
            <person name="Davies R.M."/>
            <person name="Devlin K."/>
            <person name="Feltwell T."/>
            <person name="Gentles S."/>
            <person name="Hamlin N."/>
            <person name="Holroyd S."/>
            <person name="Hornsby T."/>
            <person name="Jagels K."/>
            <person name="Krogh A."/>
            <person name="McLean J."/>
            <person name="Moule S."/>
            <person name="Murphy L.D."/>
            <person name="Oliver S."/>
            <person name="Osborne J."/>
            <person name="Quail M.A."/>
            <person name="Rajandream M.A."/>
            <person name="Rogers J."/>
            <person name="Rutter S."/>
            <person name="Seeger K."/>
            <person name="Skelton S."/>
            <person name="Squares S."/>
            <person name="Squares R."/>
            <person name="Sulston J.E."/>
            <person name="Taylor K."/>
            <person name="Whitehead S."/>
            <person name="Barrell B.G."/>
        </authorList>
    </citation>
    <scope>NUCLEOTIDE SEQUENCE [LARGE SCALE GENOMIC DNA]</scope>
    <source>
        <strain>ATCC 25618 / H37Rv</strain>
    </source>
</reference>
<evidence type="ECO:0000255" key="1"/>
<evidence type="ECO:0000256" key="2">
    <source>
        <dbReference type="SAM" id="MobiDB-lite"/>
    </source>
</evidence>
<evidence type="ECO:0000305" key="3"/>
<protein>
    <recommendedName>
        <fullName>Uncharacterized protein Rv1337</fullName>
    </recommendedName>
</protein>
<comment type="subcellular location">
    <subcellularLocation>
        <location evidence="3">Cell membrane</location>
        <topology evidence="3">Multi-pass membrane protein</topology>
    </subcellularLocation>
</comment>
<comment type="similarity">
    <text evidence="3">To M.leprae ML1171.</text>
</comment>
<sequence length="240" mass="25703">MGMTPRRKRRGGAVQITRPTGRPRTPTTQTTKRPRWVVGGTTILTFVALLYLVELIDQLSGSRLDVNGIRPLKTDGLWGVIFAPLLHANWHHLMANTIPLLVLGFLMTLAGLSRFVWATAIIWILGGLGTWLIGNVGSSCGPTDHIGASGLIFGWLAFLLVFGLFVRKGWDIVIGLVVLFVYGGILLGAMPVLGQCGGVSWQGHLSGAVAGVVAAYLLSAPERKARALKRAGARSGHPKL</sequence>
<accession>P9WM21</accession>
<accession>E2IBS6</accession>
<accession>F2GFD9</accession>
<accession>P64815</accession>
<accession>Q10647</accession>
<keyword id="KW-1003">Cell membrane</keyword>
<keyword id="KW-0472">Membrane</keyword>
<keyword id="KW-1185">Reference proteome</keyword>
<keyword id="KW-0812">Transmembrane</keyword>
<keyword id="KW-1133">Transmembrane helix</keyword>
<organism>
    <name type="scientific">Mycobacterium tuberculosis (strain ATCC 25618 / H37Rv)</name>
    <dbReference type="NCBI Taxonomy" id="83332"/>
    <lineage>
        <taxon>Bacteria</taxon>
        <taxon>Bacillati</taxon>
        <taxon>Actinomycetota</taxon>
        <taxon>Actinomycetes</taxon>
        <taxon>Mycobacteriales</taxon>
        <taxon>Mycobacteriaceae</taxon>
        <taxon>Mycobacterium</taxon>
        <taxon>Mycobacterium tuberculosis complex</taxon>
    </lineage>
</organism>
<feature type="chain" id="PRO_0000103811" description="Uncharacterized protein Rv1337">
    <location>
        <begin position="1"/>
        <end position="240"/>
    </location>
</feature>
<feature type="transmembrane region" description="Helical" evidence="1">
    <location>
        <begin position="36"/>
        <end position="56"/>
    </location>
</feature>
<feature type="transmembrane region" description="Helical" evidence="1">
    <location>
        <begin position="93"/>
        <end position="113"/>
    </location>
</feature>
<feature type="transmembrane region" description="Helical" evidence="1">
    <location>
        <begin position="115"/>
        <end position="135"/>
    </location>
</feature>
<feature type="transmembrane region" description="Helical" evidence="1">
    <location>
        <begin position="146"/>
        <end position="166"/>
    </location>
</feature>
<feature type="transmembrane region" description="Helical" evidence="1">
    <location>
        <begin position="172"/>
        <end position="192"/>
    </location>
</feature>
<feature type="transmembrane region" description="Helical" evidence="1">
    <location>
        <begin position="198"/>
        <end position="218"/>
    </location>
</feature>
<feature type="region of interest" description="Disordered" evidence="2">
    <location>
        <begin position="1"/>
        <end position="32"/>
    </location>
</feature>
<feature type="compositionally biased region" description="Basic residues" evidence="2">
    <location>
        <begin position="1"/>
        <end position="11"/>
    </location>
</feature>
<feature type="compositionally biased region" description="Low complexity" evidence="2">
    <location>
        <begin position="17"/>
        <end position="31"/>
    </location>
</feature>
<dbReference type="EMBL" id="HM453893">
    <property type="protein sequence ID" value="ADO17911.1"/>
    <property type="molecule type" value="Genomic_DNA"/>
</dbReference>
<dbReference type="EMBL" id="AL123456">
    <property type="protein sequence ID" value="CCP44095.1"/>
    <property type="molecule type" value="Genomic_DNA"/>
</dbReference>
<dbReference type="PIR" id="E70771">
    <property type="entry name" value="E70771"/>
</dbReference>
<dbReference type="RefSeq" id="NP_215853.1">
    <property type="nucleotide sequence ID" value="NC_000962.3"/>
</dbReference>
<dbReference type="RefSeq" id="WP_003898831.1">
    <property type="nucleotide sequence ID" value="NZ_NVQJ01000031.1"/>
</dbReference>
<dbReference type="STRING" id="83332.Rv1337"/>
<dbReference type="PaxDb" id="83332-Rv1337"/>
<dbReference type="DNASU" id="886870"/>
<dbReference type="GeneID" id="886870"/>
<dbReference type="KEGG" id="mtu:Rv1337"/>
<dbReference type="TubercuList" id="Rv1337"/>
<dbReference type="eggNOG" id="COG0705">
    <property type="taxonomic scope" value="Bacteria"/>
</dbReference>
<dbReference type="InParanoid" id="P9WM21"/>
<dbReference type="OrthoDB" id="465874at2"/>
<dbReference type="PhylomeDB" id="P9WM21"/>
<dbReference type="Proteomes" id="UP000001584">
    <property type="component" value="Chromosome"/>
</dbReference>
<dbReference type="GO" id="GO:0005886">
    <property type="term" value="C:plasma membrane"/>
    <property type="evidence" value="ECO:0007669"/>
    <property type="project" value="UniProtKB-SubCell"/>
</dbReference>
<dbReference type="GO" id="GO:0004252">
    <property type="term" value="F:serine-type endopeptidase activity"/>
    <property type="evidence" value="ECO:0000318"/>
    <property type="project" value="GO_Central"/>
</dbReference>
<dbReference type="FunFam" id="1.20.1540.10:FF:000029">
    <property type="entry name" value="Rhomboid protease 2"/>
    <property type="match status" value="1"/>
</dbReference>
<dbReference type="Gene3D" id="1.20.1540.10">
    <property type="entry name" value="Rhomboid-like"/>
    <property type="match status" value="1"/>
</dbReference>
<dbReference type="InterPro" id="IPR022764">
    <property type="entry name" value="Peptidase_S54_rhomboid_dom"/>
</dbReference>
<dbReference type="InterPro" id="IPR035952">
    <property type="entry name" value="Rhomboid-like_sf"/>
</dbReference>
<dbReference type="PANTHER" id="PTHR43066">
    <property type="entry name" value="RHOMBOID-RELATED PROTEIN"/>
    <property type="match status" value="1"/>
</dbReference>
<dbReference type="Pfam" id="PF01694">
    <property type="entry name" value="Rhomboid"/>
    <property type="match status" value="1"/>
</dbReference>
<dbReference type="SUPFAM" id="SSF144091">
    <property type="entry name" value="Rhomboid-like"/>
    <property type="match status" value="1"/>
</dbReference>
<name>Y1337_MYCTU</name>
<proteinExistence type="predicted"/>
<gene>
    <name type="ordered locus">Rv1337</name>
    <name type="ORF">MTCY02B10.01</name>
    <name type="ORF">MTCY130.22</name>
</gene>